<dbReference type="EMBL" id="CU329672">
    <property type="protein sequence ID" value="CAC36936.1"/>
    <property type="molecule type" value="Genomic_DNA"/>
</dbReference>
<dbReference type="RefSeq" id="NP_588426.1">
    <property type="nucleotide sequence ID" value="NM_001023417.2"/>
</dbReference>
<dbReference type="SMR" id="Q9C0U9"/>
<dbReference type="BioGRID" id="276016">
    <property type="interactions" value="7"/>
</dbReference>
<dbReference type="FunCoup" id="Q9C0U9">
    <property type="interactions" value="107"/>
</dbReference>
<dbReference type="STRING" id="284812.Q9C0U9"/>
<dbReference type="iPTMnet" id="Q9C0U9"/>
<dbReference type="PaxDb" id="4896-SPCPB1C11.03.1"/>
<dbReference type="EnsemblFungi" id="SPCPB1C11.03.1">
    <property type="protein sequence ID" value="SPCPB1C11.03.1:pep"/>
    <property type="gene ID" value="SPCPB1C11.03"/>
</dbReference>
<dbReference type="PomBase" id="SPCPB1C11.03"/>
<dbReference type="VEuPathDB" id="FungiDB:SPCPB1C11.03"/>
<dbReference type="eggNOG" id="KOG2533">
    <property type="taxonomic scope" value="Eukaryota"/>
</dbReference>
<dbReference type="HOGENOM" id="CLU_001265_0_5_1"/>
<dbReference type="InParanoid" id="Q9C0U9"/>
<dbReference type="OMA" id="PILWITC"/>
<dbReference type="PhylomeDB" id="Q9C0U9"/>
<dbReference type="PRO" id="PR:Q9C0U9"/>
<dbReference type="Proteomes" id="UP000002485">
    <property type="component" value="Chromosome III"/>
</dbReference>
<dbReference type="GO" id="GO:0005783">
    <property type="term" value="C:endoplasmic reticulum"/>
    <property type="evidence" value="ECO:0007669"/>
    <property type="project" value="UniProtKB-SubCell"/>
</dbReference>
<dbReference type="GO" id="GO:0016020">
    <property type="term" value="C:membrane"/>
    <property type="evidence" value="ECO:0000318"/>
    <property type="project" value="GO_Central"/>
</dbReference>
<dbReference type="GO" id="GO:0005886">
    <property type="term" value="C:plasma membrane"/>
    <property type="evidence" value="ECO:0000303"/>
    <property type="project" value="PomBase"/>
</dbReference>
<dbReference type="GO" id="GO:0033229">
    <property type="term" value="F:cysteine transmembrane transporter activity"/>
    <property type="evidence" value="ECO:0000318"/>
    <property type="project" value="GO_Central"/>
</dbReference>
<dbReference type="GO" id="GO:1903712">
    <property type="term" value="P:cysteine transmembrane transport"/>
    <property type="evidence" value="ECO:0000266"/>
    <property type="project" value="PomBase"/>
</dbReference>
<dbReference type="GO" id="GO:0042883">
    <property type="term" value="P:cysteine transport"/>
    <property type="evidence" value="ECO:0000318"/>
    <property type="project" value="GO_Central"/>
</dbReference>
<dbReference type="FunFam" id="1.20.1250.20:FF:000476">
    <property type="entry name" value="Cysteine transporter"/>
    <property type="match status" value="1"/>
</dbReference>
<dbReference type="Gene3D" id="1.20.1250.20">
    <property type="entry name" value="MFS general substrate transporter like domains"/>
    <property type="match status" value="1"/>
</dbReference>
<dbReference type="InterPro" id="IPR011701">
    <property type="entry name" value="MFS"/>
</dbReference>
<dbReference type="InterPro" id="IPR036259">
    <property type="entry name" value="MFS_trans_sf"/>
</dbReference>
<dbReference type="PANTHER" id="PTHR43791:SF63">
    <property type="entry name" value="HIGH AFFINITY CYSTEINE TRANSPORTER"/>
    <property type="match status" value="1"/>
</dbReference>
<dbReference type="PANTHER" id="PTHR43791">
    <property type="entry name" value="PERMEASE-RELATED"/>
    <property type="match status" value="1"/>
</dbReference>
<dbReference type="Pfam" id="PF07690">
    <property type="entry name" value="MFS_1"/>
    <property type="match status" value="1"/>
</dbReference>
<dbReference type="SUPFAM" id="SSF103473">
    <property type="entry name" value="MFS general substrate transporter"/>
    <property type="match status" value="1"/>
</dbReference>
<gene>
    <name type="ORF">SPCPB1C11.03</name>
</gene>
<proteinExistence type="evidence at protein level"/>
<protein>
    <recommendedName>
        <fullName>Uncharacterized transporter PB1C11.03</fullName>
    </recommendedName>
</protein>
<feature type="chain" id="PRO_0000372786" description="Uncharacterized transporter PB1C11.03">
    <location>
        <begin position="1"/>
        <end position="570"/>
    </location>
</feature>
<feature type="transmembrane region" description="Helical" evidence="1">
    <location>
        <begin position="96"/>
        <end position="116"/>
    </location>
</feature>
<feature type="transmembrane region" description="Helical" evidence="1">
    <location>
        <begin position="141"/>
        <end position="161"/>
    </location>
</feature>
<feature type="transmembrane region" description="Helical" evidence="1">
    <location>
        <begin position="163"/>
        <end position="183"/>
    </location>
</feature>
<feature type="transmembrane region" description="Helical" evidence="1">
    <location>
        <begin position="198"/>
        <end position="218"/>
    </location>
</feature>
<feature type="transmembrane region" description="Helical" evidence="1">
    <location>
        <begin position="229"/>
        <end position="249"/>
    </location>
</feature>
<feature type="transmembrane region" description="Helical" evidence="1">
    <location>
        <begin position="261"/>
        <end position="281"/>
    </location>
</feature>
<feature type="transmembrane region" description="Helical" evidence="1">
    <location>
        <begin position="328"/>
        <end position="348"/>
    </location>
</feature>
<feature type="transmembrane region" description="Helical" evidence="1">
    <location>
        <begin position="369"/>
        <end position="389"/>
    </location>
</feature>
<feature type="transmembrane region" description="Helical" evidence="1">
    <location>
        <begin position="397"/>
        <end position="417"/>
    </location>
</feature>
<feature type="transmembrane region" description="Helical" evidence="1">
    <location>
        <begin position="423"/>
        <end position="443"/>
    </location>
</feature>
<feature type="transmembrane region" description="Helical" evidence="1">
    <location>
        <begin position="457"/>
        <end position="477"/>
    </location>
</feature>
<feature type="transmembrane region" description="Helical" evidence="1">
    <location>
        <begin position="485"/>
        <end position="505"/>
    </location>
</feature>
<feature type="region of interest" description="Disordered" evidence="2">
    <location>
        <begin position="1"/>
        <end position="34"/>
    </location>
</feature>
<feature type="compositionally biased region" description="Low complexity" evidence="2">
    <location>
        <begin position="1"/>
        <end position="15"/>
    </location>
</feature>
<feature type="modified residue" description="Phosphoserine" evidence="4">
    <location>
        <position position="14"/>
    </location>
</feature>
<comment type="subcellular location">
    <subcellularLocation>
        <location evidence="3">Endoplasmic reticulum</location>
    </subcellularLocation>
    <subcellularLocation>
        <location evidence="1">Membrane</location>
        <topology evidence="1">Multi-pass membrane protein</topology>
    </subcellularLocation>
</comment>
<comment type="similarity">
    <text evidence="1">Belongs to the major facilitator superfamily. Allantoate permease family.</text>
</comment>
<sequence>MTESIISSRTASISSKEGYEIRQGSTDSSSLDLEKKENAVDTTIAKPFDSDEDIADVEKAGGKKINNSLIDETFAFMQDAKKLDPLTPKQESKLKWKLYIYLLLMLGFLDMMLFIGKATLSYSTILGLFDDVHITSNQYNNLNTLFYVGYIVGQFPGHYIMQTFPLGKFVGLVTFSWSVIVFLHCCAYNYGGLIALRFFLGFTESCLLPAMEATMGMFFTHQEQAFLQPVFWISCLSCGIPAGFIAYGLEFVTKSIAPWKLFMIITGGITFFLSIFLFFYYPDNPSKARFLTDEEKLYTIDRVRKSTRGGIENKIFKKHQFIEALKDPITWLFTFAAFTLMLSNNLAYQQNLIFTSLNVSDLNSTLVGVALAGYNTVSAIIATFAMYLIPNQSAYHAMFWMLPSITGGIAFVALPWSNRIGELATMIIASDFGITYIIALGWTTATSTGYTKKLTRGLMFMVGYAIANIISPQLWQSRDAPRYYPAWIVQIVVAWFVTPIIYLVARVILARRNKQRKELKDKKIAEGSLETIEKTYVDTVDEFGNPVKVLIDNSMLDLTDMENLNFVYPL</sequence>
<keyword id="KW-0256">Endoplasmic reticulum</keyword>
<keyword id="KW-0472">Membrane</keyword>
<keyword id="KW-0597">Phosphoprotein</keyword>
<keyword id="KW-1185">Reference proteome</keyword>
<keyword id="KW-0812">Transmembrane</keyword>
<keyword id="KW-1133">Transmembrane helix</keyword>
<keyword id="KW-0813">Transport</keyword>
<evidence type="ECO:0000255" key="1"/>
<evidence type="ECO:0000256" key="2">
    <source>
        <dbReference type="SAM" id="MobiDB-lite"/>
    </source>
</evidence>
<evidence type="ECO:0000269" key="3">
    <source>
    </source>
</evidence>
<evidence type="ECO:0000269" key="4">
    <source>
    </source>
</evidence>
<evidence type="ECO:0000305" key="5"/>
<evidence type="ECO:0000312" key="6">
    <source>
        <dbReference type="EMBL" id="CAC36936.1"/>
    </source>
</evidence>
<reference evidence="6" key="1">
    <citation type="journal article" date="2002" name="Nature">
        <title>The genome sequence of Schizosaccharomyces pombe.</title>
        <authorList>
            <person name="Wood V."/>
            <person name="Gwilliam R."/>
            <person name="Rajandream M.A."/>
            <person name="Lyne M.H."/>
            <person name="Lyne R."/>
            <person name="Stewart A."/>
            <person name="Sgouros J.G."/>
            <person name="Peat N."/>
            <person name="Hayles J."/>
            <person name="Baker S.G."/>
            <person name="Basham D."/>
            <person name="Bowman S."/>
            <person name="Brooks K."/>
            <person name="Brown D."/>
            <person name="Brown S."/>
            <person name="Chillingworth T."/>
            <person name="Churcher C.M."/>
            <person name="Collins M."/>
            <person name="Connor R."/>
            <person name="Cronin A."/>
            <person name="Davis P."/>
            <person name="Feltwell T."/>
            <person name="Fraser A."/>
            <person name="Gentles S."/>
            <person name="Goble A."/>
            <person name="Hamlin N."/>
            <person name="Harris D.E."/>
            <person name="Hidalgo J."/>
            <person name="Hodgson G."/>
            <person name="Holroyd S."/>
            <person name="Hornsby T."/>
            <person name="Howarth S."/>
            <person name="Huckle E.J."/>
            <person name="Hunt S."/>
            <person name="Jagels K."/>
            <person name="James K.D."/>
            <person name="Jones L."/>
            <person name="Jones M."/>
            <person name="Leather S."/>
            <person name="McDonald S."/>
            <person name="McLean J."/>
            <person name="Mooney P."/>
            <person name="Moule S."/>
            <person name="Mungall K.L."/>
            <person name="Murphy L.D."/>
            <person name="Niblett D."/>
            <person name="Odell C."/>
            <person name="Oliver K."/>
            <person name="O'Neil S."/>
            <person name="Pearson D."/>
            <person name="Quail M.A."/>
            <person name="Rabbinowitsch E."/>
            <person name="Rutherford K.M."/>
            <person name="Rutter S."/>
            <person name="Saunders D."/>
            <person name="Seeger K."/>
            <person name="Sharp S."/>
            <person name="Skelton J."/>
            <person name="Simmonds M.N."/>
            <person name="Squares R."/>
            <person name="Squares S."/>
            <person name="Stevens K."/>
            <person name="Taylor K."/>
            <person name="Taylor R.G."/>
            <person name="Tivey A."/>
            <person name="Walsh S.V."/>
            <person name="Warren T."/>
            <person name="Whitehead S."/>
            <person name="Woodward J.R."/>
            <person name="Volckaert G."/>
            <person name="Aert R."/>
            <person name="Robben J."/>
            <person name="Grymonprez B."/>
            <person name="Weltjens I."/>
            <person name="Vanstreels E."/>
            <person name="Rieger M."/>
            <person name="Schaefer M."/>
            <person name="Mueller-Auer S."/>
            <person name="Gabel C."/>
            <person name="Fuchs M."/>
            <person name="Duesterhoeft A."/>
            <person name="Fritzc C."/>
            <person name="Holzer E."/>
            <person name="Moestl D."/>
            <person name="Hilbert H."/>
            <person name="Borzym K."/>
            <person name="Langer I."/>
            <person name="Beck A."/>
            <person name="Lehrach H."/>
            <person name="Reinhardt R."/>
            <person name="Pohl T.M."/>
            <person name="Eger P."/>
            <person name="Zimmermann W."/>
            <person name="Wedler H."/>
            <person name="Wambutt R."/>
            <person name="Purnelle B."/>
            <person name="Goffeau A."/>
            <person name="Cadieu E."/>
            <person name="Dreano S."/>
            <person name="Gloux S."/>
            <person name="Lelaure V."/>
            <person name="Mottier S."/>
            <person name="Galibert F."/>
            <person name="Aves S.J."/>
            <person name="Xiang Z."/>
            <person name="Hunt C."/>
            <person name="Moore K."/>
            <person name="Hurst S.M."/>
            <person name="Lucas M."/>
            <person name="Rochet M."/>
            <person name="Gaillardin C."/>
            <person name="Tallada V.A."/>
            <person name="Garzon A."/>
            <person name="Thode G."/>
            <person name="Daga R.R."/>
            <person name="Cruzado L."/>
            <person name="Jimenez J."/>
            <person name="Sanchez M."/>
            <person name="del Rey F."/>
            <person name="Benito J."/>
            <person name="Dominguez A."/>
            <person name="Revuelta J.L."/>
            <person name="Moreno S."/>
            <person name="Armstrong J."/>
            <person name="Forsburg S.L."/>
            <person name="Cerutti L."/>
            <person name="Lowe T."/>
            <person name="McCombie W.R."/>
            <person name="Paulsen I."/>
            <person name="Potashkin J."/>
            <person name="Shpakovski G.V."/>
            <person name="Ussery D."/>
            <person name="Barrell B.G."/>
            <person name="Nurse P."/>
        </authorList>
    </citation>
    <scope>NUCLEOTIDE SEQUENCE [LARGE SCALE GENOMIC DNA]</scope>
    <source>
        <strain>972 / ATCC 24843</strain>
    </source>
</reference>
<reference evidence="5" key="2">
    <citation type="journal article" date="2006" name="Nat. Biotechnol.">
        <title>ORFeome cloning and global analysis of protein localization in the fission yeast Schizosaccharomyces pombe.</title>
        <authorList>
            <person name="Matsuyama A."/>
            <person name="Arai R."/>
            <person name="Yashiroda Y."/>
            <person name="Shirai A."/>
            <person name="Kamata A."/>
            <person name="Sekido S."/>
            <person name="Kobayashi Y."/>
            <person name="Hashimoto A."/>
            <person name="Hamamoto M."/>
            <person name="Hiraoka Y."/>
            <person name="Horinouchi S."/>
            <person name="Yoshida M."/>
        </authorList>
    </citation>
    <scope>SUBCELLULAR LOCATION [LARGE SCALE ANALYSIS]</scope>
</reference>
<reference evidence="5" key="3">
    <citation type="journal article" date="2008" name="J. Proteome Res.">
        <title>Phosphoproteome analysis of fission yeast.</title>
        <authorList>
            <person name="Wilson-Grady J.T."/>
            <person name="Villen J."/>
            <person name="Gygi S.P."/>
        </authorList>
    </citation>
    <scope>PHOSPHORYLATION [LARGE SCALE ANALYSIS] AT SER-14</scope>
    <scope>IDENTIFICATION BY MASS SPECTROMETRY</scope>
</reference>
<name>YQD3_SCHPO</name>
<organism>
    <name type="scientific">Schizosaccharomyces pombe (strain 972 / ATCC 24843)</name>
    <name type="common">Fission yeast</name>
    <dbReference type="NCBI Taxonomy" id="284812"/>
    <lineage>
        <taxon>Eukaryota</taxon>
        <taxon>Fungi</taxon>
        <taxon>Dikarya</taxon>
        <taxon>Ascomycota</taxon>
        <taxon>Taphrinomycotina</taxon>
        <taxon>Schizosaccharomycetes</taxon>
        <taxon>Schizosaccharomycetales</taxon>
        <taxon>Schizosaccharomycetaceae</taxon>
        <taxon>Schizosaccharomyces</taxon>
    </lineage>
</organism>
<accession>Q9C0U9</accession>